<accession>Q9Y5E8</accession>
<accession>Q8IUX5</accession>
<feature type="signal peptide" evidence="2">
    <location>
        <begin position="1"/>
        <end position="26"/>
    </location>
</feature>
<feature type="chain" id="PRO_0000003942" description="Protocadherin beta-15">
    <location>
        <begin position="27"/>
        <end position="787"/>
    </location>
</feature>
<feature type="topological domain" description="Extracellular" evidence="2">
    <location>
        <begin position="27"/>
        <end position="690"/>
    </location>
</feature>
<feature type="transmembrane region" description="Helical" evidence="2">
    <location>
        <begin position="691"/>
        <end position="711"/>
    </location>
</feature>
<feature type="topological domain" description="Cytoplasmic" evidence="2">
    <location>
        <begin position="712"/>
        <end position="787"/>
    </location>
</feature>
<feature type="domain" description="Cadherin 1" evidence="3">
    <location>
        <begin position="35"/>
        <end position="133"/>
    </location>
</feature>
<feature type="domain" description="Cadherin 2" evidence="3">
    <location>
        <begin position="138"/>
        <end position="242"/>
    </location>
</feature>
<feature type="domain" description="Cadherin 3" evidence="3">
    <location>
        <begin position="247"/>
        <end position="347"/>
    </location>
</feature>
<feature type="domain" description="Cadherin 4" evidence="3">
    <location>
        <begin position="352"/>
        <end position="451"/>
    </location>
</feature>
<feature type="domain" description="Cadherin 5" evidence="3">
    <location>
        <begin position="456"/>
        <end position="561"/>
    </location>
</feature>
<feature type="domain" description="Cadherin 6" evidence="3">
    <location>
        <begin position="568"/>
        <end position="671"/>
    </location>
</feature>
<feature type="glycosylation site" description="N-linked (GlcNAc...) asparagine" evidence="2">
    <location>
        <position position="418"/>
    </location>
</feature>
<feature type="glycosylation site" description="N-linked (GlcNAc...) asparagine" evidence="2">
    <location>
        <position position="567"/>
    </location>
</feature>
<feature type="sequence variant" id="VAR_019633" description="In dbSNP:rs618506." evidence="4">
    <original>S</original>
    <variation>R</variation>
    <location>
        <position position="474"/>
    </location>
</feature>
<feature type="sequence variant" id="VAR_019634" description="In dbSNP:rs618096." evidence="4">
    <original>R</original>
    <variation>Q</variation>
    <location>
        <position position="494"/>
    </location>
</feature>
<feature type="sequence variant" id="VAR_036106" description="In a breast cancer sample; somatic mutation." evidence="5">
    <original>A</original>
    <variation>V</variation>
    <location>
        <position position="719"/>
    </location>
</feature>
<feature type="sequence variant" id="VAR_036107" description="In a breast cancer sample; somatic mutation." evidence="5">
    <original>G</original>
    <variation>V</variation>
    <location>
        <position position="758"/>
    </location>
</feature>
<protein>
    <recommendedName>
        <fullName>Protocadherin beta-15</fullName>
        <shortName>PCDH-beta-15</shortName>
    </recommendedName>
</protein>
<comment type="function">
    <text>Potential calcium-dependent cell-adhesion protein. May be involved in the establishment and maintenance of specific neuronal connections in the brain.</text>
</comment>
<comment type="subcellular location">
    <subcellularLocation>
        <location evidence="1">Cell membrane</location>
        <topology evidence="1">Single-pass type I membrane protein</topology>
    </subcellularLocation>
</comment>
<organism>
    <name type="scientific">Homo sapiens</name>
    <name type="common">Human</name>
    <dbReference type="NCBI Taxonomy" id="9606"/>
    <lineage>
        <taxon>Eukaryota</taxon>
        <taxon>Metazoa</taxon>
        <taxon>Chordata</taxon>
        <taxon>Craniata</taxon>
        <taxon>Vertebrata</taxon>
        <taxon>Euteleostomi</taxon>
        <taxon>Mammalia</taxon>
        <taxon>Eutheria</taxon>
        <taxon>Euarchontoglires</taxon>
        <taxon>Primates</taxon>
        <taxon>Haplorrhini</taxon>
        <taxon>Catarrhini</taxon>
        <taxon>Hominidae</taxon>
        <taxon>Homo</taxon>
    </lineage>
</organism>
<sequence>MEPAGERFPEQRQVLILLLLLEVTLAGWEPRRYSVMEETERGSFVANLANDLGLGVGELAERGARVVSEDNEQGLQLDLQTGQLILNEKLDREKLCGPTEPCIMHFQVLLKKPLEVFRAELLVTDINDHSPEFPEREMTLKIPETSSLGTVFPLKKARDLDVGSNNVQNYNISPNSHFHVSTRTRGDGRKYPELVLDTELDREEQAELRLTLTAVDGGSPPRSGTVQILILVLDANDNAPEFVQALYEVQVPENSPVGSLVVKVSARDLDTGTNGEISYSLYYSSQEIDKPFELSSLSGEIRLIKKLDFETMSSYDLDIEASDGGGLSGKCSVSVKVLDVNDNFPELSISSLTSPIPENSPETEVALFRIRDRDSGENGKMICSIQDDVPFKLKPSVENFYRLVTEGALDRETRAEYNITITITDLGTPRLKTEQSITVLVSDVNDNAPAFTQTSYTLFVRENNSPALHIGSVSATDRDSGTNAQVTYSLLPPRDPHLPLTSLVSINTDNGHLFALQSLDYEALQAFEFRVGATDRGFPALSSEALVRVLVLDANDNSPFVLYPLQNGSAPCTELVPRAAEPGYLVTKVVAVDGDSGQNAWLSYQLLKATEPGLFGVWAHNGEVRTARLLSERDVAKHRLVVLVKDNGEPPRSATATLQVLLVDGFSQPYLPLPEAAPAQAQADSLTVYLVVALASVSSLFLFSVFLFVAVRLCRRSRAASVGRCSVPEGPFPGHLVDVSGTGTLSQSYQYEVCLTGGSESNDFKFLKPIFPNIVSQDSRRKSEFLE</sequence>
<gene>
    <name type="primary">PCDHB15</name>
</gene>
<reference key="1">
    <citation type="journal article" date="1999" name="Cell">
        <title>A striking organization of a large family of human neural cadherin-like cell adhesion genes.</title>
        <authorList>
            <person name="Wu Q."/>
            <person name="Maniatis T."/>
        </authorList>
    </citation>
    <scope>NUCLEOTIDE SEQUENCE [MRNA]</scope>
</reference>
<reference key="2">
    <citation type="journal article" date="2001" name="FEBS Lett.">
        <title>The human and murine protocadherin-beta one-exon gene families show high evolutionary conservation, despite the difference in gene number.</title>
        <authorList>
            <person name="Vanhalst K."/>
            <person name="Kools P."/>
            <person name="Vanden Eynde E."/>
            <person name="van Roy F."/>
        </authorList>
    </citation>
    <scope>NUCLEOTIDE SEQUENCE [MRNA]</scope>
</reference>
<reference key="3">
    <citation type="journal article" date="2004" name="Genome Res.">
        <title>The status, quality, and expansion of the NIH full-length cDNA project: the Mammalian Gene Collection (MGC).</title>
        <authorList>
            <consortium name="The MGC Project Team"/>
        </authorList>
    </citation>
    <scope>NUCLEOTIDE SEQUENCE [LARGE SCALE MRNA]</scope>
    <scope>VARIANTS ARG-474 AND GLN-494</scope>
    <source>
        <tissue>Brain</tissue>
    </source>
</reference>
<reference key="4">
    <citation type="journal article" date="2006" name="Science">
        <title>The consensus coding sequences of human breast and colorectal cancers.</title>
        <authorList>
            <person name="Sjoeblom T."/>
            <person name="Jones S."/>
            <person name="Wood L.D."/>
            <person name="Parsons D.W."/>
            <person name="Lin J."/>
            <person name="Barber T.D."/>
            <person name="Mandelker D."/>
            <person name="Leary R.J."/>
            <person name="Ptak J."/>
            <person name="Silliman N."/>
            <person name="Szabo S."/>
            <person name="Buckhaults P."/>
            <person name="Farrell C."/>
            <person name="Meeh P."/>
            <person name="Markowitz S.D."/>
            <person name="Willis J."/>
            <person name="Dawson D."/>
            <person name="Willson J.K.V."/>
            <person name="Gazdar A.F."/>
            <person name="Hartigan J."/>
            <person name="Wu L."/>
            <person name="Liu C."/>
            <person name="Parmigiani G."/>
            <person name="Park B.H."/>
            <person name="Bachman K.E."/>
            <person name="Papadopoulos N."/>
            <person name="Vogelstein B."/>
            <person name="Kinzler K.W."/>
            <person name="Velculescu V.E."/>
        </authorList>
    </citation>
    <scope>VARIANTS [LARGE SCALE ANALYSIS] VAL-719 AND VAL-758</scope>
</reference>
<evidence type="ECO:0000250" key="1"/>
<evidence type="ECO:0000255" key="2"/>
<evidence type="ECO:0000255" key="3">
    <source>
        <dbReference type="PROSITE-ProRule" id="PRU00043"/>
    </source>
</evidence>
<evidence type="ECO:0000269" key="4">
    <source>
    </source>
</evidence>
<evidence type="ECO:0000269" key="5">
    <source>
    </source>
</evidence>
<dbReference type="EMBL" id="AF152494">
    <property type="protein sequence ID" value="AAD43755.1"/>
    <property type="molecule type" value="mRNA"/>
</dbReference>
<dbReference type="EMBL" id="AF217742">
    <property type="protein sequence ID" value="AAK51610.1"/>
    <property type="molecule type" value="mRNA"/>
</dbReference>
<dbReference type="EMBL" id="BC038797">
    <property type="protein sequence ID" value="AAH38797.1"/>
    <property type="molecule type" value="mRNA"/>
</dbReference>
<dbReference type="CCDS" id="CCDS4257.1"/>
<dbReference type="RefSeq" id="NP_061758.1">
    <property type="nucleotide sequence ID" value="NM_018935.4"/>
</dbReference>
<dbReference type="SMR" id="Q9Y5E8"/>
<dbReference type="BioGRID" id="121061">
    <property type="interactions" value="26"/>
</dbReference>
<dbReference type="FunCoup" id="Q9Y5E8">
    <property type="interactions" value="20"/>
</dbReference>
<dbReference type="IntAct" id="Q9Y5E8">
    <property type="interactions" value="28"/>
</dbReference>
<dbReference type="STRING" id="9606.ENSP00000231173"/>
<dbReference type="GlyConnect" id="1679">
    <property type="glycosylation" value="1 N-Linked glycan (1 site)"/>
</dbReference>
<dbReference type="GlyCosmos" id="Q9Y5E8">
    <property type="glycosylation" value="2 sites, 1 glycan"/>
</dbReference>
<dbReference type="GlyGen" id="Q9Y5E8">
    <property type="glycosylation" value="3 sites, 1 N-linked glycan (1 site)"/>
</dbReference>
<dbReference type="iPTMnet" id="Q9Y5E8"/>
<dbReference type="PhosphoSitePlus" id="Q9Y5E8"/>
<dbReference type="BioMuta" id="PCDHB15"/>
<dbReference type="DMDM" id="13431379"/>
<dbReference type="jPOST" id="Q9Y5E8"/>
<dbReference type="MassIVE" id="Q9Y5E8"/>
<dbReference type="PaxDb" id="9606-ENSP00000231173"/>
<dbReference type="PeptideAtlas" id="Q9Y5E8"/>
<dbReference type="ProteomicsDB" id="86347"/>
<dbReference type="Antibodypedia" id="2352">
    <property type="antibodies" value="155 antibodies from 23 providers"/>
</dbReference>
<dbReference type="DNASU" id="56121"/>
<dbReference type="Ensembl" id="ENST00000231173.6">
    <property type="protein sequence ID" value="ENSP00000231173.3"/>
    <property type="gene ID" value="ENSG00000113248.6"/>
</dbReference>
<dbReference type="Ensembl" id="ENST00000708388.1">
    <property type="protein sequence ID" value="ENSP00000517208.1"/>
    <property type="gene ID" value="ENSG00000291695.1"/>
</dbReference>
<dbReference type="GeneID" id="56121"/>
<dbReference type="KEGG" id="hsa:56121"/>
<dbReference type="MANE-Select" id="ENST00000231173.6">
    <property type="protein sequence ID" value="ENSP00000231173.3"/>
    <property type="RefSeq nucleotide sequence ID" value="NM_018935.4"/>
    <property type="RefSeq protein sequence ID" value="NP_061758.1"/>
</dbReference>
<dbReference type="UCSC" id="uc003lje.5">
    <property type="organism name" value="human"/>
</dbReference>
<dbReference type="AGR" id="HGNC:8686"/>
<dbReference type="CTD" id="56121"/>
<dbReference type="DisGeNET" id="56121"/>
<dbReference type="GeneCards" id="PCDHB15"/>
<dbReference type="HGNC" id="HGNC:8686">
    <property type="gene designation" value="PCDHB15"/>
</dbReference>
<dbReference type="HPA" id="ENSG00000113248">
    <property type="expression patterns" value="Low tissue specificity"/>
</dbReference>
<dbReference type="MIM" id="604967">
    <property type="type" value="gene"/>
</dbReference>
<dbReference type="MIM" id="606341">
    <property type="type" value="gene"/>
</dbReference>
<dbReference type="neXtProt" id="NX_Q9Y5E8"/>
<dbReference type="OpenTargets" id="ENSG00000113248"/>
<dbReference type="PharmGKB" id="PA33031"/>
<dbReference type="VEuPathDB" id="HostDB:ENSG00000113248"/>
<dbReference type="eggNOG" id="KOG3594">
    <property type="taxonomic scope" value="Eukaryota"/>
</dbReference>
<dbReference type="GeneTree" id="ENSGT00940000162842"/>
<dbReference type="HOGENOM" id="CLU_006480_3_0_1"/>
<dbReference type="InParanoid" id="Q9Y5E8"/>
<dbReference type="OMA" id="GWEPRRY"/>
<dbReference type="OrthoDB" id="6252479at2759"/>
<dbReference type="PAN-GO" id="Q9Y5E8">
    <property type="GO annotations" value="2 GO annotations based on evolutionary models"/>
</dbReference>
<dbReference type="PhylomeDB" id="Q9Y5E8"/>
<dbReference type="TreeFam" id="TF332299"/>
<dbReference type="PathwayCommons" id="Q9Y5E8"/>
<dbReference type="SignaLink" id="Q9Y5E8"/>
<dbReference type="BioGRID-ORCS" id="56121">
    <property type="hits" value="11 hits in 1102 CRISPR screens"/>
</dbReference>
<dbReference type="GeneWiki" id="PCDHB15"/>
<dbReference type="GenomeRNAi" id="56121"/>
<dbReference type="Pharos" id="Q9Y5E8">
    <property type="development level" value="Tdark"/>
</dbReference>
<dbReference type="PRO" id="PR:Q9Y5E8"/>
<dbReference type="Proteomes" id="UP000005640">
    <property type="component" value="Chromosome 5"/>
</dbReference>
<dbReference type="RNAct" id="Q9Y5E8">
    <property type="molecule type" value="protein"/>
</dbReference>
<dbReference type="Bgee" id="ENSG00000113248">
    <property type="expression patterns" value="Expressed in cortical plate and 99 other cell types or tissues"/>
</dbReference>
<dbReference type="ExpressionAtlas" id="Q9Y5E8">
    <property type="expression patterns" value="baseline and differential"/>
</dbReference>
<dbReference type="GO" id="GO:0032391">
    <property type="term" value="C:photoreceptor connecting cilium"/>
    <property type="evidence" value="ECO:0007669"/>
    <property type="project" value="Ensembl"/>
</dbReference>
<dbReference type="GO" id="GO:0005886">
    <property type="term" value="C:plasma membrane"/>
    <property type="evidence" value="ECO:0000318"/>
    <property type="project" value="GO_Central"/>
</dbReference>
<dbReference type="GO" id="GO:0005509">
    <property type="term" value="F:calcium ion binding"/>
    <property type="evidence" value="ECO:0007669"/>
    <property type="project" value="InterPro"/>
</dbReference>
<dbReference type="GO" id="GO:0007155">
    <property type="term" value="P:cell adhesion"/>
    <property type="evidence" value="ECO:0000318"/>
    <property type="project" value="GO_Central"/>
</dbReference>
<dbReference type="GO" id="GO:0007156">
    <property type="term" value="P:homophilic cell adhesion via plasma membrane adhesion molecules"/>
    <property type="evidence" value="ECO:0007669"/>
    <property type="project" value="InterPro"/>
</dbReference>
<dbReference type="GO" id="GO:0007399">
    <property type="term" value="P:nervous system development"/>
    <property type="evidence" value="ECO:0000304"/>
    <property type="project" value="ProtInc"/>
</dbReference>
<dbReference type="CDD" id="cd11304">
    <property type="entry name" value="Cadherin_repeat"/>
    <property type="match status" value="5"/>
</dbReference>
<dbReference type="FunFam" id="2.60.40.60:FF:000001">
    <property type="entry name" value="Protocadherin alpha 2"/>
    <property type="match status" value="1"/>
</dbReference>
<dbReference type="FunFam" id="2.60.40.60:FF:000002">
    <property type="entry name" value="Protocadherin alpha 2"/>
    <property type="match status" value="1"/>
</dbReference>
<dbReference type="FunFam" id="2.60.40.60:FF:000006">
    <property type="entry name" value="Protocadherin alpha 2"/>
    <property type="match status" value="1"/>
</dbReference>
<dbReference type="FunFam" id="2.60.40.60:FF:000046">
    <property type="entry name" value="Protocadherin beta 5"/>
    <property type="match status" value="1"/>
</dbReference>
<dbReference type="FunFam" id="2.60.40.60:FF:000309">
    <property type="entry name" value="Protocadherin beta-8"/>
    <property type="match status" value="1"/>
</dbReference>
<dbReference type="FunFam" id="2.60.40.60:FF:000018">
    <property type="entry name" value="Protocadherin gamma c3"/>
    <property type="match status" value="1"/>
</dbReference>
<dbReference type="Gene3D" id="2.60.40.60">
    <property type="entry name" value="Cadherins"/>
    <property type="match status" value="6"/>
</dbReference>
<dbReference type="InterPro" id="IPR002126">
    <property type="entry name" value="Cadherin-like_dom"/>
</dbReference>
<dbReference type="InterPro" id="IPR015919">
    <property type="entry name" value="Cadherin-like_sf"/>
</dbReference>
<dbReference type="InterPro" id="IPR032455">
    <property type="entry name" value="Cadherin_C"/>
</dbReference>
<dbReference type="InterPro" id="IPR020894">
    <property type="entry name" value="Cadherin_CS"/>
</dbReference>
<dbReference type="InterPro" id="IPR013164">
    <property type="entry name" value="Cadherin_N"/>
</dbReference>
<dbReference type="InterPro" id="IPR050174">
    <property type="entry name" value="Protocadherin/Cadherin-CA"/>
</dbReference>
<dbReference type="PANTHER" id="PTHR24028">
    <property type="entry name" value="CADHERIN-87A"/>
    <property type="match status" value="1"/>
</dbReference>
<dbReference type="PANTHER" id="PTHR24028:SF97">
    <property type="entry name" value="PROTOCADHERIN BETA-15"/>
    <property type="match status" value="1"/>
</dbReference>
<dbReference type="Pfam" id="PF00028">
    <property type="entry name" value="Cadherin"/>
    <property type="match status" value="5"/>
</dbReference>
<dbReference type="Pfam" id="PF08266">
    <property type="entry name" value="Cadherin_2"/>
    <property type="match status" value="1"/>
</dbReference>
<dbReference type="Pfam" id="PF16492">
    <property type="entry name" value="Cadherin_C_2"/>
    <property type="match status" value="1"/>
</dbReference>
<dbReference type="PRINTS" id="PR00205">
    <property type="entry name" value="CADHERIN"/>
</dbReference>
<dbReference type="SMART" id="SM00112">
    <property type="entry name" value="CA"/>
    <property type="match status" value="5"/>
</dbReference>
<dbReference type="SUPFAM" id="SSF49313">
    <property type="entry name" value="Cadherin-like"/>
    <property type="match status" value="6"/>
</dbReference>
<dbReference type="PROSITE" id="PS00232">
    <property type="entry name" value="CADHERIN_1"/>
    <property type="match status" value="5"/>
</dbReference>
<dbReference type="PROSITE" id="PS50268">
    <property type="entry name" value="CADHERIN_2"/>
    <property type="match status" value="6"/>
</dbReference>
<proteinExistence type="evidence at protein level"/>
<name>PCDBF_HUMAN</name>
<keyword id="KW-0106">Calcium</keyword>
<keyword id="KW-0130">Cell adhesion</keyword>
<keyword id="KW-1003">Cell membrane</keyword>
<keyword id="KW-0325">Glycoprotein</keyword>
<keyword id="KW-0472">Membrane</keyword>
<keyword id="KW-1267">Proteomics identification</keyword>
<keyword id="KW-1185">Reference proteome</keyword>
<keyword id="KW-0677">Repeat</keyword>
<keyword id="KW-0732">Signal</keyword>
<keyword id="KW-0812">Transmembrane</keyword>
<keyword id="KW-1133">Transmembrane helix</keyword>